<feature type="chain" id="PRO_0000293440" description="Small ribosomal subunit protein uS4c">
    <location>
        <begin position="1"/>
        <end position="194"/>
    </location>
</feature>
<feature type="domain" description="S4 RNA-binding">
    <location>
        <begin position="84"/>
        <end position="144"/>
    </location>
</feature>
<geneLocation type="chloroplast"/>
<comment type="function">
    <text evidence="1">One of the primary rRNA binding proteins, it binds directly to 16S rRNA where it nucleates assembly of the body of the 30S subunit.</text>
</comment>
<comment type="function">
    <text evidence="1">With S5 and S12 plays an important role in translational accuracy.</text>
</comment>
<comment type="subunit">
    <text evidence="1">Part of the 30S ribosomal subunit. Contacts protein S5. The interaction surface between S4 and S5 is involved in control of translational fidelity (By similarity).</text>
</comment>
<comment type="subcellular location">
    <subcellularLocation>
        <location>Plastid</location>
        <location>Chloroplast</location>
    </subcellularLocation>
</comment>
<comment type="similarity">
    <text evidence="2">Belongs to the universal ribosomal protein uS4 family.</text>
</comment>
<evidence type="ECO:0000250" key="1"/>
<evidence type="ECO:0000305" key="2"/>
<name>RR4_BIGNA</name>
<proteinExistence type="inferred from homology"/>
<organism>
    <name type="scientific">Bigelowiella natans</name>
    <name type="common">Pedinomonas minutissima</name>
    <name type="synonym">Chlorarachnion sp. (strain CCMP621)</name>
    <dbReference type="NCBI Taxonomy" id="227086"/>
    <lineage>
        <taxon>Eukaryota</taxon>
        <taxon>Sar</taxon>
        <taxon>Rhizaria</taxon>
        <taxon>Cercozoa</taxon>
        <taxon>Chlorarachniophyceae</taxon>
        <taxon>Bigelowiella</taxon>
    </lineage>
</organism>
<keyword id="KW-0150">Chloroplast</keyword>
<keyword id="KW-0934">Plastid</keyword>
<keyword id="KW-0687">Ribonucleoprotein</keyword>
<keyword id="KW-0689">Ribosomal protein</keyword>
<keyword id="KW-0694">RNA-binding</keyword>
<keyword id="KW-0699">rRNA-binding</keyword>
<protein>
    <recommendedName>
        <fullName evidence="2">Small ribosomal subunit protein uS4c</fullName>
    </recommendedName>
    <alternativeName>
        <fullName>30S ribosomal protein S4, chloroplastic</fullName>
    </alternativeName>
</protein>
<dbReference type="EMBL" id="DQ851108">
    <property type="protein sequence ID" value="ABG91425.1"/>
    <property type="molecule type" value="Genomic_DNA"/>
</dbReference>
<dbReference type="RefSeq" id="YP_778593.1">
    <property type="nucleotide sequence ID" value="NC_008408.1"/>
</dbReference>
<dbReference type="SMR" id="Q06J34"/>
<dbReference type="GeneID" id="4353010"/>
<dbReference type="GO" id="GO:0009507">
    <property type="term" value="C:chloroplast"/>
    <property type="evidence" value="ECO:0007669"/>
    <property type="project" value="UniProtKB-SubCell"/>
</dbReference>
<dbReference type="GO" id="GO:0015935">
    <property type="term" value="C:small ribosomal subunit"/>
    <property type="evidence" value="ECO:0007669"/>
    <property type="project" value="InterPro"/>
</dbReference>
<dbReference type="GO" id="GO:0019843">
    <property type="term" value="F:rRNA binding"/>
    <property type="evidence" value="ECO:0007669"/>
    <property type="project" value="UniProtKB-UniRule"/>
</dbReference>
<dbReference type="GO" id="GO:0003735">
    <property type="term" value="F:structural constituent of ribosome"/>
    <property type="evidence" value="ECO:0007669"/>
    <property type="project" value="InterPro"/>
</dbReference>
<dbReference type="GO" id="GO:0042274">
    <property type="term" value="P:ribosomal small subunit biogenesis"/>
    <property type="evidence" value="ECO:0007669"/>
    <property type="project" value="TreeGrafter"/>
</dbReference>
<dbReference type="GO" id="GO:0006412">
    <property type="term" value="P:translation"/>
    <property type="evidence" value="ECO:0007669"/>
    <property type="project" value="UniProtKB-UniRule"/>
</dbReference>
<dbReference type="CDD" id="cd00165">
    <property type="entry name" value="S4"/>
    <property type="match status" value="1"/>
</dbReference>
<dbReference type="Gene3D" id="1.10.1050.10">
    <property type="entry name" value="Ribosomal Protein S4 Delta 41, Chain A, domain 1"/>
    <property type="match status" value="1"/>
</dbReference>
<dbReference type="Gene3D" id="3.10.290.10">
    <property type="entry name" value="RNA-binding S4 domain"/>
    <property type="match status" value="1"/>
</dbReference>
<dbReference type="HAMAP" id="MF_01306_B">
    <property type="entry name" value="Ribosomal_uS4_B"/>
    <property type="match status" value="1"/>
</dbReference>
<dbReference type="InterPro" id="IPR022801">
    <property type="entry name" value="Ribosomal_uS4"/>
</dbReference>
<dbReference type="InterPro" id="IPR005709">
    <property type="entry name" value="Ribosomal_uS4_bac-type"/>
</dbReference>
<dbReference type="InterPro" id="IPR018079">
    <property type="entry name" value="Ribosomal_uS4_CS"/>
</dbReference>
<dbReference type="InterPro" id="IPR001912">
    <property type="entry name" value="Ribosomal_uS4_N"/>
</dbReference>
<dbReference type="InterPro" id="IPR002942">
    <property type="entry name" value="S4_RNA-bd"/>
</dbReference>
<dbReference type="InterPro" id="IPR036986">
    <property type="entry name" value="S4_RNA-bd_sf"/>
</dbReference>
<dbReference type="NCBIfam" id="NF003717">
    <property type="entry name" value="PRK05327.1"/>
    <property type="match status" value="1"/>
</dbReference>
<dbReference type="PANTHER" id="PTHR11831">
    <property type="entry name" value="30S 40S RIBOSOMAL PROTEIN"/>
    <property type="match status" value="1"/>
</dbReference>
<dbReference type="PANTHER" id="PTHR11831:SF4">
    <property type="entry name" value="SMALL RIBOSOMAL SUBUNIT PROTEIN US4M"/>
    <property type="match status" value="1"/>
</dbReference>
<dbReference type="Pfam" id="PF00163">
    <property type="entry name" value="Ribosomal_S4"/>
    <property type="match status" value="1"/>
</dbReference>
<dbReference type="Pfam" id="PF01479">
    <property type="entry name" value="S4"/>
    <property type="match status" value="1"/>
</dbReference>
<dbReference type="SMART" id="SM01390">
    <property type="entry name" value="Ribosomal_S4"/>
    <property type="match status" value="1"/>
</dbReference>
<dbReference type="SMART" id="SM00363">
    <property type="entry name" value="S4"/>
    <property type="match status" value="1"/>
</dbReference>
<dbReference type="SUPFAM" id="SSF55174">
    <property type="entry name" value="Alpha-L RNA-binding motif"/>
    <property type="match status" value="1"/>
</dbReference>
<dbReference type="PROSITE" id="PS00632">
    <property type="entry name" value="RIBOSOMAL_S4"/>
    <property type="match status" value="1"/>
</dbReference>
<dbReference type="PROSITE" id="PS50889">
    <property type="entry name" value="S4"/>
    <property type="match status" value="1"/>
</dbReference>
<accession>Q06J34</accession>
<reference key="1">
    <citation type="journal article" date="2007" name="Mol. Biol. Evol.">
        <title>The complete chloroplast genome of the chlorarachniophyte Bigelowiella natans: evidence for independent origins of chlorarachniophyte and euglenid secondary endosymbionts.</title>
        <authorList>
            <person name="Rogers M.B."/>
            <person name="Gilson P.R."/>
            <person name="Su V."/>
            <person name="McFadden G.I."/>
            <person name="Keeling P.J."/>
        </authorList>
    </citation>
    <scope>NUCLEOTIDE SEQUENCE [LARGE SCALE GENOMIC DNA]</scope>
</reference>
<sequence length="194" mass="22049">MARYRGSRVKVIRRLGLLPGFTSKSSNKPQNNNKQLSQYGFHLQEKQKLRYNYGISEHELIKYVKSARRKRGNSGDKLLQLLEMRLDTLLYRTGFVPTVASARQLISHGHINVNGKKVDIPGFNCSISDKIVINKEILKSLNDKNNSFSTLNCSHLVLNELNNDLTITVTNLPDIQVLGYSINILLVLEYYSGK</sequence>
<gene>
    <name type="primary">rps4</name>
</gene>